<reference key="1">
    <citation type="journal article" date="2001" name="Nature">
        <title>Complete genome sequence of a multiple drug resistant Salmonella enterica serovar Typhi CT18.</title>
        <authorList>
            <person name="Parkhill J."/>
            <person name="Dougan G."/>
            <person name="James K.D."/>
            <person name="Thomson N.R."/>
            <person name="Pickard D."/>
            <person name="Wain J."/>
            <person name="Churcher C.M."/>
            <person name="Mungall K.L."/>
            <person name="Bentley S.D."/>
            <person name="Holden M.T.G."/>
            <person name="Sebaihia M."/>
            <person name="Baker S."/>
            <person name="Basham D."/>
            <person name="Brooks K."/>
            <person name="Chillingworth T."/>
            <person name="Connerton P."/>
            <person name="Cronin A."/>
            <person name="Davis P."/>
            <person name="Davies R.M."/>
            <person name="Dowd L."/>
            <person name="White N."/>
            <person name="Farrar J."/>
            <person name="Feltwell T."/>
            <person name="Hamlin N."/>
            <person name="Haque A."/>
            <person name="Hien T.T."/>
            <person name="Holroyd S."/>
            <person name="Jagels K."/>
            <person name="Krogh A."/>
            <person name="Larsen T.S."/>
            <person name="Leather S."/>
            <person name="Moule S."/>
            <person name="O'Gaora P."/>
            <person name="Parry C."/>
            <person name="Quail M.A."/>
            <person name="Rutherford K.M."/>
            <person name="Simmonds M."/>
            <person name="Skelton J."/>
            <person name="Stevens K."/>
            <person name="Whitehead S."/>
            <person name="Barrell B.G."/>
        </authorList>
    </citation>
    <scope>NUCLEOTIDE SEQUENCE [LARGE SCALE GENOMIC DNA]</scope>
    <source>
        <strain>CT18</strain>
    </source>
</reference>
<reference key="2">
    <citation type="journal article" date="2003" name="J. Bacteriol.">
        <title>Comparative genomics of Salmonella enterica serovar Typhi strains Ty2 and CT18.</title>
        <authorList>
            <person name="Deng W."/>
            <person name="Liou S.-R."/>
            <person name="Plunkett G. III"/>
            <person name="Mayhew G.F."/>
            <person name="Rose D.J."/>
            <person name="Burland V."/>
            <person name="Kodoyianni V."/>
            <person name="Schwartz D.C."/>
            <person name="Blattner F.R."/>
        </authorList>
    </citation>
    <scope>NUCLEOTIDE SEQUENCE [LARGE SCALE GENOMIC DNA]</scope>
    <source>
        <strain>ATCC 700931 / Ty2</strain>
    </source>
</reference>
<comment type="function">
    <text evidence="1">Sequence-specific endonuclease that cleaves unmethylated GATC sequences. It is involved in DNA mismatch repair.</text>
</comment>
<comment type="subcellular location">
    <subcellularLocation>
        <location evidence="1">Cytoplasm</location>
    </subcellularLocation>
</comment>
<comment type="similarity">
    <text evidence="1">Belongs to the MutH family.</text>
</comment>
<organism>
    <name type="scientific">Salmonella typhi</name>
    <dbReference type="NCBI Taxonomy" id="90370"/>
    <lineage>
        <taxon>Bacteria</taxon>
        <taxon>Pseudomonadati</taxon>
        <taxon>Pseudomonadota</taxon>
        <taxon>Gammaproteobacteria</taxon>
        <taxon>Enterobacterales</taxon>
        <taxon>Enterobacteriaceae</taxon>
        <taxon>Salmonella</taxon>
    </lineage>
</organism>
<gene>
    <name evidence="1" type="primary">mutH</name>
    <name type="ordered locus">STY3148</name>
    <name type="ordered locus">t2914</name>
</gene>
<sequence length="231" mass="25438">MSALCPLLTPPASEALLLAQARQLSGYTLGELAVMAGITTPKDLKRDKGWIGVLLEIWLGASAGSKPEQDFAALGVELKTIPVDSLGRPLETTFVCVAPLTGNSGVTWETSHVRHKLKRVLWVPVEGDRSIPLAERRVGSPLLWSPSEEEDRQLRLDWEELMDMIVLGQVERITARHGEVLQLRPKAANARALTEAIGARGEPILTLPRGFYLKKNFTQALLARHFLLQNP</sequence>
<name>MUTH_SALTI</name>
<protein>
    <recommendedName>
        <fullName evidence="1">DNA mismatch repair protein MutH</fullName>
    </recommendedName>
    <alternativeName>
        <fullName evidence="1">Methyl-directed mismatch repair protein</fullName>
    </alternativeName>
</protein>
<evidence type="ECO:0000255" key="1">
    <source>
        <dbReference type="HAMAP-Rule" id="MF_00759"/>
    </source>
</evidence>
<keyword id="KW-0963">Cytoplasm</keyword>
<keyword id="KW-0227">DNA damage</keyword>
<keyword id="KW-0234">DNA repair</keyword>
<keyword id="KW-0255">Endonuclease</keyword>
<keyword id="KW-0378">Hydrolase</keyword>
<keyword id="KW-0540">Nuclease</keyword>
<dbReference type="EMBL" id="AL513382">
    <property type="protein sequence ID" value="CAD02830.1"/>
    <property type="molecule type" value="Genomic_DNA"/>
</dbReference>
<dbReference type="EMBL" id="AE014613">
    <property type="protein sequence ID" value="AAO70468.1"/>
    <property type="molecule type" value="Genomic_DNA"/>
</dbReference>
<dbReference type="RefSeq" id="NP_457399.1">
    <property type="nucleotide sequence ID" value="NC_003198.1"/>
</dbReference>
<dbReference type="RefSeq" id="WP_001274935.1">
    <property type="nucleotide sequence ID" value="NZ_WSUR01000055.1"/>
</dbReference>
<dbReference type="SMR" id="Q8Z410"/>
<dbReference type="STRING" id="220341.gene:17587030"/>
<dbReference type="KEGG" id="stt:t2914"/>
<dbReference type="KEGG" id="sty:STY3148"/>
<dbReference type="PATRIC" id="fig|220341.7.peg.3202"/>
<dbReference type="eggNOG" id="COG3066">
    <property type="taxonomic scope" value="Bacteria"/>
</dbReference>
<dbReference type="HOGENOM" id="CLU_086669_0_0_6"/>
<dbReference type="OMA" id="WEELMDY"/>
<dbReference type="OrthoDB" id="5634909at2"/>
<dbReference type="Proteomes" id="UP000000541">
    <property type="component" value="Chromosome"/>
</dbReference>
<dbReference type="Proteomes" id="UP000002670">
    <property type="component" value="Chromosome"/>
</dbReference>
<dbReference type="GO" id="GO:0005737">
    <property type="term" value="C:cytoplasm"/>
    <property type="evidence" value="ECO:0007669"/>
    <property type="project" value="UniProtKB-SubCell"/>
</dbReference>
<dbReference type="GO" id="GO:0003677">
    <property type="term" value="F:DNA binding"/>
    <property type="evidence" value="ECO:0007669"/>
    <property type="project" value="InterPro"/>
</dbReference>
<dbReference type="GO" id="GO:0004519">
    <property type="term" value="F:endonuclease activity"/>
    <property type="evidence" value="ECO:0007669"/>
    <property type="project" value="UniProtKB-UniRule"/>
</dbReference>
<dbReference type="GO" id="GO:0006304">
    <property type="term" value="P:DNA modification"/>
    <property type="evidence" value="ECO:0007669"/>
    <property type="project" value="InterPro"/>
</dbReference>
<dbReference type="GO" id="GO:0006298">
    <property type="term" value="P:mismatch repair"/>
    <property type="evidence" value="ECO:0007669"/>
    <property type="project" value="UniProtKB-UniRule"/>
</dbReference>
<dbReference type="CDD" id="cd00583">
    <property type="entry name" value="MutH-like"/>
    <property type="match status" value="1"/>
</dbReference>
<dbReference type="FunFam" id="3.40.600.10:FF:000001">
    <property type="entry name" value="DNA mismatch repair protein MutH"/>
    <property type="match status" value="1"/>
</dbReference>
<dbReference type="Gene3D" id="3.40.600.10">
    <property type="entry name" value="DNA mismatch repair MutH/Restriction endonuclease, type II"/>
    <property type="match status" value="1"/>
</dbReference>
<dbReference type="HAMAP" id="MF_00759">
    <property type="entry name" value="MutH"/>
    <property type="match status" value="1"/>
</dbReference>
<dbReference type="InterPro" id="IPR004230">
    <property type="entry name" value="DNA_mismatch_repair_MutH"/>
</dbReference>
<dbReference type="InterPro" id="IPR011337">
    <property type="entry name" value="DNA_rep_MutH/RE_typeII_Sau3AI"/>
</dbReference>
<dbReference type="InterPro" id="IPR037057">
    <property type="entry name" value="DNA_rep_MutH/T2_RE_sf"/>
</dbReference>
<dbReference type="InterPro" id="IPR011335">
    <property type="entry name" value="Restrct_endonuc-II-like"/>
</dbReference>
<dbReference type="NCBIfam" id="TIGR02248">
    <property type="entry name" value="mutH_TIGR"/>
    <property type="match status" value="1"/>
</dbReference>
<dbReference type="NCBIfam" id="NF003458">
    <property type="entry name" value="PRK05070.1"/>
    <property type="match status" value="1"/>
</dbReference>
<dbReference type="Pfam" id="PF02976">
    <property type="entry name" value="MutH"/>
    <property type="match status" value="1"/>
</dbReference>
<dbReference type="SMART" id="SM00927">
    <property type="entry name" value="MutH"/>
    <property type="match status" value="1"/>
</dbReference>
<dbReference type="SUPFAM" id="SSF52980">
    <property type="entry name" value="Restriction endonuclease-like"/>
    <property type="match status" value="1"/>
</dbReference>
<proteinExistence type="inferred from homology"/>
<feature type="chain" id="PRO_0000198672" description="DNA mismatch repair protein MutH">
    <location>
        <begin position="1"/>
        <end position="231"/>
    </location>
</feature>
<accession>Q8Z410</accession>